<protein>
    <recommendedName>
        <fullName evidence="1">UPF0200 protein TGAM_0868</fullName>
    </recommendedName>
</protein>
<dbReference type="EMBL" id="CP001398">
    <property type="protein sequence ID" value="ACS33370.1"/>
    <property type="molecule type" value="Genomic_DNA"/>
</dbReference>
<dbReference type="RefSeq" id="WP_015858485.1">
    <property type="nucleotide sequence ID" value="NC_012804.1"/>
</dbReference>
<dbReference type="SMR" id="C5A558"/>
<dbReference type="STRING" id="593117.TGAM_0868"/>
<dbReference type="PaxDb" id="593117-TGAM_0868"/>
<dbReference type="GeneID" id="7989035"/>
<dbReference type="KEGG" id="tga:TGAM_0868"/>
<dbReference type="PATRIC" id="fig|593117.10.peg.865"/>
<dbReference type="eggNOG" id="arCOG01045">
    <property type="taxonomic scope" value="Archaea"/>
</dbReference>
<dbReference type="HOGENOM" id="CLU_096329_1_0_2"/>
<dbReference type="OrthoDB" id="85381at2157"/>
<dbReference type="Proteomes" id="UP000001488">
    <property type="component" value="Chromosome"/>
</dbReference>
<dbReference type="GO" id="GO:0005524">
    <property type="term" value="F:ATP binding"/>
    <property type="evidence" value="ECO:0007669"/>
    <property type="project" value="UniProtKB-UniRule"/>
</dbReference>
<dbReference type="Gene3D" id="3.40.50.300">
    <property type="entry name" value="P-loop containing nucleotide triphosphate hydrolases"/>
    <property type="match status" value="1"/>
</dbReference>
<dbReference type="HAMAP" id="MF_01111">
    <property type="entry name" value="UPF0200"/>
    <property type="match status" value="1"/>
</dbReference>
<dbReference type="InterPro" id="IPR022970">
    <property type="entry name" value="NTP_hydrolase-rel"/>
</dbReference>
<dbReference type="InterPro" id="IPR027417">
    <property type="entry name" value="P-loop_NTPase"/>
</dbReference>
<dbReference type="PANTHER" id="PTHR41930:SF1">
    <property type="entry name" value="DEPHOSPHO-COA KINASE"/>
    <property type="match status" value="1"/>
</dbReference>
<dbReference type="PANTHER" id="PTHR41930">
    <property type="entry name" value="UPF0200 PROTEIN MJ1399"/>
    <property type="match status" value="1"/>
</dbReference>
<dbReference type="Pfam" id="PF13207">
    <property type="entry name" value="AAA_17"/>
    <property type="match status" value="1"/>
</dbReference>
<dbReference type="SUPFAM" id="SSF52540">
    <property type="entry name" value="P-loop containing nucleoside triphosphate hydrolases"/>
    <property type="match status" value="1"/>
</dbReference>
<feature type="chain" id="PRO_1000213581" description="UPF0200 protein TGAM_0868">
    <location>
        <begin position="1"/>
        <end position="190"/>
    </location>
</feature>
<feature type="binding site" evidence="1">
    <location>
        <begin position="7"/>
        <end position="14"/>
    </location>
    <ligand>
        <name>ATP</name>
        <dbReference type="ChEBI" id="CHEBI:30616"/>
    </ligand>
</feature>
<name>Y868_THEGJ</name>
<comment type="similarity">
    <text evidence="1">Belongs to the UPF0200 family.</text>
</comment>
<gene>
    <name type="ordered locus">TGAM_0868</name>
</gene>
<reference key="1">
    <citation type="journal article" date="2007" name="Genome Biol.">
        <title>Genome analysis and genome-wide proteomics of Thermococcus gammatolerans, the most radioresistant organism known amongst the Archaea.</title>
        <authorList>
            <person name="Zivanovic Y."/>
            <person name="Armengaud J."/>
            <person name="Lagorce A."/>
            <person name="Leplat C."/>
            <person name="Guerin P."/>
            <person name="Dutertre M."/>
            <person name="Anthouard V."/>
            <person name="Forterre P."/>
            <person name="Wincker P."/>
            <person name="Confalonieri F."/>
        </authorList>
    </citation>
    <scope>NUCLEOTIDE SEQUENCE [LARGE SCALE GENOMIC DNA]</scope>
    <source>
        <strain>DSM 15229 / JCM 11827 / EJ3</strain>
    </source>
</reference>
<keyword id="KW-0067">ATP-binding</keyword>
<keyword id="KW-0547">Nucleotide-binding</keyword>
<keyword id="KW-1185">Reference proteome</keyword>
<proteinExistence type="inferred from homology"/>
<sequence>MIVIVTGMPGSGKSRIVEEFEKRGFPSVSLGDIVREETVKRGLELTKENVAKVSIRLRQELGQNAVAKLAVGKVRVLLEKSPLVVIDGVRSLDEVGTFRGAFPEEKIIIVAVHTPPRLRFERLKARGRHDDPQTWEDFEERDWKELRFGIGGVIAMADHMLINDGSKEEYEKKVKTLVEKIIRGLNRGGA</sequence>
<evidence type="ECO:0000255" key="1">
    <source>
        <dbReference type="HAMAP-Rule" id="MF_01111"/>
    </source>
</evidence>
<accession>C5A558</accession>
<organism>
    <name type="scientific">Thermococcus gammatolerans (strain DSM 15229 / JCM 11827 / EJ3)</name>
    <dbReference type="NCBI Taxonomy" id="593117"/>
    <lineage>
        <taxon>Archaea</taxon>
        <taxon>Methanobacteriati</taxon>
        <taxon>Methanobacteriota</taxon>
        <taxon>Thermococci</taxon>
        <taxon>Thermococcales</taxon>
        <taxon>Thermococcaceae</taxon>
        <taxon>Thermococcus</taxon>
    </lineage>
</organism>